<evidence type="ECO:0000255" key="1">
    <source>
        <dbReference type="HAMAP-Rule" id="MF_00642"/>
    </source>
</evidence>
<evidence type="ECO:0000312" key="2">
    <source>
        <dbReference type="Proteomes" id="UP000006591"/>
    </source>
</evidence>
<accession>Q6ENF6</accession>
<sequence length="83" mass="9445">MSGSTGERSFADIITSIRYWVIHSITIPSLFIAGWLFVSTGLAYDVFGSPRPNEYFTESRQGIPLITDRFDSLEQLDEFSRSF</sequence>
<geneLocation type="chloroplast"/>
<protein>
    <recommendedName>
        <fullName evidence="1">Cytochrome b559 subunit alpha</fullName>
    </recommendedName>
    <alternativeName>
        <fullName evidence="1">PSII reaction center subunit V</fullName>
    </alternativeName>
</protein>
<dbReference type="EMBL" id="AP006728">
    <property type="protein sequence ID" value="BAD26796.1"/>
    <property type="molecule type" value="Genomic_DNA"/>
</dbReference>
<dbReference type="RefSeq" id="YP_052767.1">
    <property type="nucleotide sequence ID" value="NC_005973.1"/>
</dbReference>
<dbReference type="SMR" id="Q6ENF6"/>
<dbReference type="STRING" id="4536.Q6ENF6"/>
<dbReference type="GeneID" id="2885941"/>
<dbReference type="Proteomes" id="UP000006591">
    <property type="component" value="Chloroplast"/>
</dbReference>
<dbReference type="GO" id="GO:0009535">
    <property type="term" value="C:chloroplast thylakoid membrane"/>
    <property type="evidence" value="ECO:0007669"/>
    <property type="project" value="UniProtKB-SubCell"/>
</dbReference>
<dbReference type="GO" id="GO:0009539">
    <property type="term" value="C:photosystem II reaction center"/>
    <property type="evidence" value="ECO:0007669"/>
    <property type="project" value="InterPro"/>
</dbReference>
<dbReference type="GO" id="GO:0009536">
    <property type="term" value="C:plastid"/>
    <property type="evidence" value="ECO:0000305"/>
    <property type="project" value="Gramene"/>
</dbReference>
<dbReference type="GO" id="GO:0009055">
    <property type="term" value="F:electron transfer activity"/>
    <property type="evidence" value="ECO:0007669"/>
    <property type="project" value="UniProtKB-UniRule"/>
</dbReference>
<dbReference type="GO" id="GO:0020037">
    <property type="term" value="F:heme binding"/>
    <property type="evidence" value="ECO:0007669"/>
    <property type="project" value="InterPro"/>
</dbReference>
<dbReference type="GO" id="GO:0005506">
    <property type="term" value="F:iron ion binding"/>
    <property type="evidence" value="ECO:0007669"/>
    <property type="project" value="UniProtKB-UniRule"/>
</dbReference>
<dbReference type="GO" id="GO:0009767">
    <property type="term" value="P:photosynthetic electron transport chain"/>
    <property type="evidence" value="ECO:0007669"/>
    <property type="project" value="InterPro"/>
</dbReference>
<dbReference type="Gene3D" id="1.20.5.860">
    <property type="entry name" value="Photosystem II cytochrome b559, alpha subunit"/>
    <property type="match status" value="1"/>
</dbReference>
<dbReference type="HAMAP" id="MF_00642">
    <property type="entry name" value="PSII_PsbE"/>
    <property type="match status" value="1"/>
</dbReference>
<dbReference type="InterPro" id="IPR006217">
    <property type="entry name" value="PSII_cyt_b559_asu"/>
</dbReference>
<dbReference type="InterPro" id="IPR037025">
    <property type="entry name" value="PSII_cyt_b559_asu_sf"/>
</dbReference>
<dbReference type="InterPro" id="IPR006216">
    <property type="entry name" value="PSII_cyt_b559_CS"/>
</dbReference>
<dbReference type="InterPro" id="IPR013081">
    <property type="entry name" value="PSII_cyt_b559_N"/>
</dbReference>
<dbReference type="InterPro" id="IPR013082">
    <property type="entry name" value="PSII_cytb559_asu_lum"/>
</dbReference>
<dbReference type="NCBIfam" id="TIGR01332">
    <property type="entry name" value="cyt_b559_alpha"/>
    <property type="match status" value="1"/>
</dbReference>
<dbReference type="PANTHER" id="PTHR33391:SF13">
    <property type="entry name" value="CYTOCHROME B559 SUBUNIT ALPHA"/>
    <property type="match status" value="1"/>
</dbReference>
<dbReference type="PANTHER" id="PTHR33391">
    <property type="entry name" value="CYTOCHROME B559 SUBUNIT BETA-RELATED"/>
    <property type="match status" value="1"/>
</dbReference>
<dbReference type="Pfam" id="PF00283">
    <property type="entry name" value="Cytochrom_B559"/>
    <property type="match status" value="1"/>
</dbReference>
<dbReference type="Pfam" id="PF00284">
    <property type="entry name" value="Cytochrom_B559a"/>
    <property type="match status" value="1"/>
</dbReference>
<dbReference type="PIRSF" id="PIRSF000036">
    <property type="entry name" value="PsbE"/>
    <property type="match status" value="1"/>
</dbReference>
<dbReference type="SUPFAM" id="SSF161045">
    <property type="entry name" value="Cytochrome b559 subunits"/>
    <property type="match status" value="1"/>
</dbReference>
<dbReference type="PROSITE" id="PS00537">
    <property type="entry name" value="CYTOCHROME_B559"/>
    <property type="match status" value="1"/>
</dbReference>
<name>PSBE_ORYNI</name>
<organism>
    <name type="scientific">Oryza nivara</name>
    <name type="common">Indian wild rice</name>
    <name type="synonym">Oryza sativa f. spontanea</name>
    <dbReference type="NCBI Taxonomy" id="4536"/>
    <lineage>
        <taxon>Eukaryota</taxon>
        <taxon>Viridiplantae</taxon>
        <taxon>Streptophyta</taxon>
        <taxon>Embryophyta</taxon>
        <taxon>Tracheophyta</taxon>
        <taxon>Spermatophyta</taxon>
        <taxon>Magnoliopsida</taxon>
        <taxon>Liliopsida</taxon>
        <taxon>Poales</taxon>
        <taxon>Poaceae</taxon>
        <taxon>BOP clade</taxon>
        <taxon>Oryzoideae</taxon>
        <taxon>Oryzeae</taxon>
        <taxon>Oryzinae</taxon>
        <taxon>Oryza</taxon>
    </lineage>
</organism>
<feature type="chain" id="PRO_0000200326" description="Cytochrome b559 subunit alpha">
    <location>
        <begin position="1"/>
        <end position="83"/>
    </location>
</feature>
<feature type="transmembrane region" description="Helical" evidence="1">
    <location>
        <begin position="21"/>
        <end position="35"/>
    </location>
</feature>
<feature type="binding site" description="axial binding residue" evidence="1">
    <location>
        <position position="23"/>
    </location>
    <ligand>
        <name>heme</name>
        <dbReference type="ChEBI" id="CHEBI:30413"/>
        <note>ligand shared with beta subunit</note>
    </ligand>
    <ligandPart>
        <name>Fe</name>
        <dbReference type="ChEBI" id="CHEBI:18248"/>
    </ligandPart>
</feature>
<proteinExistence type="inferred from homology"/>
<keyword id="KW-0150">Chloroplast</keyword>
<keyword id="KW-0249">Electron transport</keyword>
<keyword id="KW-0349">Heme</keyword>
<keyword id="KW-0408">Iron</keyword>
<keyword id="KW-0472">Membrane</keyword>
<keyword id="KW-0479">Metal-binding</keyword>
<keyword id="KW-0602">Photosynthesis</keyword>
<keyword id="KW-0604">Photosystem II</keyword>
<keyword id="KW-0934">Plastid</keyword>
<keyword id="KW-1185">Reference proteome</keyword>
<keyword id="KW-0793">Thylakoid</keyword>
<keyword id="KW-0812">Transmembrane</keyword>
<keyword id="KW-1133">Transmembrane helix</keyword>
<keyword id="KW-0813">Transport</keyword>
<gene>
    <name evidence="1" type="primary">psbE</name>
</gene>
<reference key="1">
    <citation type="journal article" date="2004" name="Gene">
        <title>The complete nucleotide sequence of wild rice (Oryza nivara) chloroplast genome: first genome wide comparative sequence analysis of wild and cultivated rice.</title>
        <authorList>
            <person name="Masood M.S."/>
            <person name="Nishikawa T."/>
            <person name="Fukuoka S."/>
            <person name="Njenga P.K."/>
            <person name="Tsudzuki T."/>
            <person name="Kadowaki K."/>
        </authorList>
    </citation>
    <scope>NUCLEOTIDE SEQUENCE [LARGE SCALE GENOMIC DNA]</scope>
    <source>
        <strain evidence="2">cv. SL10</strain>
    </source>
</reference>
<comment type="function">
    <text evidence="1">This b-type cytochrome is tightly associated with the reaction center of photosystem II (PSII). PSII is a light-driven water:plastoquinone oxidoreductase that uses light energy to abstract electrons from H(2)O, generating O(2) and a proton gradient subsequently used for ATP formation. It consists of a core antenna complex that captures photons, and an electron transfer chain that converts photonic excitation into a charge separation.</text>
</comment>
<comment type="cofactor">
    <cofactor evidence="1">
        <name>heme b</name>
        <dbReference type="ChEBI" id="CHEBI:60344"/>
    </cofactor>
    <text evidence="1">With its partner (PsbF) binds heme. PSII binds additional chlorophylls, carotenoids and specific lipids.</text>
</comment>
<comment type="subunit">
    <text evidence="1">Heterodimer of an alpha subunit and a beta subunit. PSII is composed of 1 copy each of membrane proteins PsbA, PsbB, PsbC, PsbD, PsbE, PsbF, PsbH, PsbI, PsbJ, PsbK, PsbL, PsbM, PsbT, PsbX, PsbY, PsbZ, Psb30/Ycf12, at least 3 peripheral proteins of the oxygen-evolving complex and a large number of cofactors. It forms dimeric complexes.</text>
</comment>
<comment type="subcellular location">
    <subcellularLocation>
        <location evidence="1">Plastid</location>
        <location evidence="1">Chloroplast thylakoid membrane</location>
        <topology evidence="1">Single-pass membrane protein</topology>
    </subcellularLocation>
</comment>
<comment type="similarity">
    <text evidence="1">Belongs to the PsbE/PsbF family.</text>
</comment>